<feature type="chain" id="PRO_0000317106" description="Putative cancer susceptibility gene HEPN1 protein">
    <location>
        <begin position="1"/>
        <end position="88"/>
    </location>
</feature>
<feature type="sequence variant" id="VAR_051027" description="In dbSNP:rs3802904." evidence="1">
    <original>W</original>
    <variation>R</variation>
    <location>
        <position position="37"/>
    </location>
</feature>
<comment type="subcellular location">
    <subcellularLocation>
        <location evidence="1">Cytoplasm</location>
    </subcellularLocation>
</comment>
<comment type="tissue specificity">
    <text evidence="1">Expressed in liver. Expression is either down-regulated or lost in hepatocellular carcinomas (HCC).</text>
</comment>
<comment type="caution">
    <text evidence="2">Product of a dubious CDS prediction. Encoded by the 3'-UTR of HEPACAM.</text>
</comment>
<keyword id="KW-0963">Cytoplasm</keyword>
<keyword id="KW-1185">Reference proteome</keyword>
<accession>Q6WQI6</accession>
<organism>
    <name type="scientific">Homo sapiens</name>
    <name type="common">Human</name>
    <dbReference type="NCBI Taxonomy" id="9606"/>
    <lineage>
        <taxon>Eukaryota</taxon>
        <taxon>Metazoa</taxon>
        <taxon>Chordata</taxon>
        <taxon>Craniata</taxon>
        <taxon>Vertebrata</taxon>
        <taxon>Euteleostomi</taxon>
        <taxon>Mammalia</taxon>
        <taxon>Eutheria</taxon>
        <taxon>Euarchontoglires</taxon>
        <taxon>Primates</taxon>
        <taxon>Haplorrhini</taxon>
        <taxon>Catarrhini</taxon>
        <taxon>Hominidae</taxon>
        <taxon>Homo</taxon>
    </lineage>
</organism>
<dbReference type="EMBL" id="AY275431">
    <property type="protein sequence ID" value="AAQ19120.1"/>
    <property type="molecule type" value="mRNA"/>
</dbReference>
<dbReference type="EMBL" id="BC037810">
    <property type="status" value="NOT_ANNOTATED_CDS"/>
    <property type="molecule type" value="mRNA"/>
</dbReference>
<dbReference type="RefSeq" id="NP_001032647.2">
    <property type="nucleotide sequence ID" value="NM_001037558.4"/>
</dbReference>
<dbReference type="BioGRID" id="535011">
    <property type="interactions" value="10"/>
</dbReference>
<dbReference type="IntAct" id="Q6WQI6">
    <property type="interactions" value="10"/>
</dbReference>
<dbReference type="MINT" id="Q6WQI6"/>
<dbReference type="STRING" id="9606.ENSP00000386143"/>
<dbReference type="BioMuta" id="HEPN1"/>
<dbReference type="PaxDb" id="9606-ENSP00000386143"/>
<dbReference type="Antibodypedia" id="65577">
    <property type="antibodies" value="63 antibodies from 11 providers"/>
</dbReference>
<dbReference type="DNASU" id="641654"/>
<dbReference type="Ensembl" id="ENST00000408930.7">
    <property type="protein sequence ID" value="ENSP00000386143.4"/>
    <property type="gene ID" value="ENSG00000221932.7"/>
</dbReference>
<dbReference type="GeneID" id="641654"/>
<dbReference type="KEGG" id="hsa:641654"/>
<dbReference type="MANE-Select" id="ENST00000408930.7">
    <property type="protein sequence ID" value="ENSP00000386143.4"/>
    <property type="RefSeq nucleotide sequence ID" value="NM_001037558.4"/>
    <property type="RefSeq protein sequence ID" value="NP_001032647.2"/>
</dbReference>
<dbReference type="UCSC" id="uc001qbj.2">
    <property type="organism name" value="human"/>
</dbReference>
<dbReference type="AGR" id="HGNC:34400"/>
<dbReference type="CTD" id="641654"/>
<dbReference type="DisGeNET" id="641654"/>
<dbReference type="GeneCards" id="HEPN1"/>
<dbReference type="HGNC" id="HGNC:34400">
    <property type="gene designation" value="HEPN1"/>
</dbReference>
<dbReference type="HPA" id="ENSG00000221932">
    <property type="expression patterns" value="Tissue enriched (brain)"/>
</dbReference>
<dbReference type="MIM" id="611641">
    <property type="type" value="gene"/>
</dbReference>
<dbReference type="neXtProt" id="NX_Q6WQI6"/>
<dbReference type="OpenTargets" id="ENSG00000221932"/>
<dbReference type="PharmGKB" id="PA162390850"/>
<dbReference type="VEuPathDB" id="HostDB:ENSG00000221932"/>
<dbReference type="eggNOG" id="ENOG502TE5T">
    <property type="taxonomic scope" value="Eukaryota"/>
</dbReference>
<dbReference type="GeneTree" id="ENSGT00510000055197"/>
<dbReference type="HOGENOM" id="CLU_2468423_0_0_1"/>
<dbReference type="InParanoid" id="Q6WQI6"/>
<dbReference type="OMA" id="NRWWHGH"/>
<dbReference type="OrthoDB" id="9480156at2759"/>
<dbReference type="PAN-GO" id="Q6WQI6">
    <property type="GO annotations" value="0 GO annotations based on evolutionary models"/>
</dbReference>
<dbReference type="PhylomeDB" id="Q6WQI6"/>
<dbReference type="PathwayCommons" id="Q6WQI6"/>
<dbReference type="SignaLink" id="Q6WQI6"/>
<dbReference type="BioGRID-ORCS" id="641654">
    <property type="hits" value="142 hits in 1063 CRISPR screens"/>
</dbReference>
<dbReference type="GenomeRNAi" id="641654"/>
<dbReference type="Pharos" id="Q6WQI6">
    <property type="development level" value="Tdark"/>
</dbReference>
<dbReference type="Proteomes" id="UP000005640">
    <property type="component" value="Chromosome 11"/>
</dbReference>
<dbReference type="RNAct" id="Q6WQI6">
    <property type="molecule type" value="protein"/>
</dbReference>
<dbReference type="Bgee" id="ENSG00000221932">
    <property type="expression patterns" value="Expressed in male germ line stem cell (sensu Vertebrata) in testis and 83 other cell types or tissues"/>
</dbReference>
<dbReference type="GO" id="GO:0005737">
    <property type="term" value="C:cytoplasm"/>
    <property type="evidence" value="ECO:0007669"/>
    <property type="project" value="UniProtKB-SubCell"/>
</dbReference>
<gene>
    <name type="primary">HEPN1</name>
</gene>
<reference key="1">
    <citation type="journal article" date="2003" name="J. Hepatol.">
        <title>HEPN1, a novel gene that is frequently down-regulated in hepatocellular carcinoma, suppresses cell growth and induces apoptosis in HepG2 cells.</title>
        <authorList>
            <person name="Moh M.C."/>
            <person name="Lee L.H."/>
            <person name="Yang X."/>
            <person name="Shen S."/>
        </authorList>
    </citation>
    <scope>NUCLEOTIDE SEQUENCE [MRNA]</scope>
    <scope>SUBCELLULAR LOCATION</scope>
    <scope>TISSUE SPECIFICITY</scope>
    <scope>VARIANT ARG-37</scope>
</reference>
<reference key="2">
    <citation type="journal article" date="2004" name="Genome Res.">
        <title>The status, quality, and expansion of the NIH full-length cDNA project: the Mammalian Gene Collection (MGC).</title>
        <authorList>
            <consortium name="The MGC Project Team"/>
        </authorList>
    </citation>
    <scope>NUCLEOTIDE SEQUENCE [LARGE SCALE MRNA]</scope>
    <source>
        <tissue>Hypothalamus</tissue>
    </source>
</reference>
<protein>
    <recommendedName>
        <fullName>Putative cancer susceptibility gene HEPN1 protein</fullName>
    </recommendedName>
</protein>
<proteinExistence type="uncertain"/>
<evidence type="ECO:0000269" key="1">
    <source>
    </source>
</evidence>
<evidence type="ECO:0000305" key="2"/>
<name>HEPN1_HUMAN</name>
<sequence length="88" mass="10305">MGNWGLGIAPWVDGESELEFRRLGMQGPLEALRRREWNTQRASFSFSFLIALSPHTVDYCHSYELFNRRWHGHVLATQRPSLFILMLV</sequence>